<sequence>MNRITVDQVRDEAKNVRTLFFRWDHDVKPGQFVMVWLPGLGEIPMSLSYVGSPKGITVKAYGKVSQAMIDMEPGHEFYIRGPYGNGFQIESGRKLIIGGGSGIASLLPIADSDTDALISAKTKEELIFTDRFPESRLFIATDDGSEGFHGFPHEFLDRLDISVYRKIYVCGPEPMLYRVMQKLASMNARAEFSLERTMKCGIGICDSCSVGGLQVCRQGPVFDIEQLRNNPEFGISRTTYSGKRVYLNMK</sequence>
<name>PYRK_THEAC</name>
<organism>
    <name type="scientific">Thermoplasma acidophilum (strain ATCC 25905 / DSM 1728 / JCM 9062 / NBRC 15155 / AMRC-C165)</name>
    <dbReference type="NCBI Taxonomy" id="273075"/>
    <lineage>
        <taxon>Archaea</taxon>
        <taxon>Methanobacteriati</taxon>
        <taxon>Thermoplasmatota</taxon>
        <taxon>Thermoplasmata</taxon>
        <taxon>Thermoplasmatales</taxon>
        <taxon>Thermoplasmataceae</taxon>
        <taxon>Thermoplasma</taxon>
    </lineage>
</organism>
<feature type="chain" id="PRO_0000148383" description="Probable dihydroorotate dehydrogenase B (NAD(+)), electron transfer subunit">
    <location>
        <begin position="1"/>
        <end position="250"/>
    </location>
</feature>
<feature type="domain" description="FAD-binding FR-type" evidence="1">
    <location>
        <begin position="1"/>
        <end position="89"/>
    </location>
</feature>
<feature type="binding site" evidence="1">
    <location>
        <position position="200"/>
    </location>
    <ligand>
        <name>[2Fe-2S] cluster</name>
        <dbReference type="ChEBI" id="CHEBI:190135"/>
    </ligand>
</feature>
<feature type="binding site" evidence="1">
    <location>
        <position position="205"/>
    </location>
    <ligand>
        <name>[2Fe-2S] cluster</name>
        <dbReference type="ChEBI" id="CHEBI:190135"/>
    </ligand>
</feature>
<feature type="binding site" evidence="1">
    <location>
        <position position="208"/>
    </location>
    <ligand>
        <name>[2Fe-2S] cluster</name>
        <dbReference type="ChEBI" id="CHEBI:190135"/>
    </ligand>
</feature>
<feature type="binding site" evidence="1">
    <location>
        <position position="216"/>
    </location>
    <ligand>
        <name>[2Fe-2S] cluster</name>
        <dbReference type="ChEBI" id="CHEBI:190135"/>
    </ligand>
</feature>
<comment type="function">
    <text evidence="1">Responsible for channeling the electrons from the oxidation of dihydroorotate from the FMN redox center in the PyrD type B subunit to the ultimate electron acceptor NAD(+).</text>
</comment>
<comment type="cofactor">
    <cofactor evidence="1">
        <name>[2Fe-2S] cluster</name>
        <dbReference type="ChEBI" id="CHEBI:190135"/>
    </cofactor>
    <text evidence="1">Binds 1 [2Fe-2S] cluster per subunit.</text>
</comment>
<comment type="cofactor">
    <cofactor evidence="1">
        <name>FAD</name>
        <dbReference type="ChEBI" id="CHEBI:57692"/>
    </cofactor>
    <text evidence="1">Binds 1 FAD per subunit.</text>
</comment>
<comment type="pathway">
    <text evidence="1">Pyrimidine metabolism; UMP biosynthesis via de novo pathway; orotate from (S)-dihydroorotate (NAD(+) route): step 1/1.</text>
</comment>
<comment type="subunit">
    <text evidence="1">Heterotetramer of 2 PyrK and 2 PyrD type B subunits.</text>
</comment>
<comment type="similarity">
    <text evidence="1">Belongs to the PyrK family.</text>
</comment>
<gene>
    <name evidence="1" type="primary">pyrK</name>
    <name type="ordered locus">Ta0403</name>
</gene>
<proteinExistence type="inferred from homology"/>
<accession>Q9HL36</accession>
<reference key="1">
    <citation type="journal article" date="2000" name="Nature">
        <title>The genome sequence of the thermoacidophilic scavenger Thermoplasma acidophilum.</title>
        <authorList>
            <person name="Ruepp A."/>
            <person name="Graml W."/>
            <person name="Santos-Martinez M.-L."/>
            <person name="Koretke K.K."/>
            <person name="Volker C."/>
            <person name="Mewes H.-W."/>
            <person name="Frishman D."/>
            <person name="Stocker S."/>
            <person name="Lupas A.N."/>
            <person name="Baumeister W."/>
        </authorList>
    </citation>
    <scope>NUCLEOTIDE SEQUENCE [LARGE SCALE GENOMIC DNA]</scope>
    <source>
        <strain>ATCC 25905 / DSM 1728 / JCM 9062 / NBRC 15155 / AMRC-C165</strain>
    </source>
</reference>
<dbReference type="EMBL" id="AL445064">
    <property type="protein sequence ID" value="CAC11546.1"/>
    <property type="molecule type" value="Genomic_DNA"/>
</dbReference>
<dbReference type="RefSeq" id="WP_010900831.1">
    <property type="nucleotide sequence ID" value="NC_002578.1"/>
</dbReference>
<dbReference type="SMR" id="Q9HL36"/>
<dbReference type="STRING" id="273075.gene:9571623"/>
<dbReference type="PaxDb" id="273075-Ta0403"/>
<dbReference type="EnsemblBacteria" id="CAC11546">
    <property type="protein sequence ID" value="CAC11546"/>
    <property type="gene ID" value="CAC11546"/>
</dbReference>
<dbReference type="KEGG" id="tac:Ta0403"/>
<dbReference type="eggNOG" id="arCOG02199">
    <property type="taxonomic scope" value="Archaea"/>
</dbReference>
<dbReference type="HOGENOM" id="CLU_003827_1_1_2"/>
<dbReference type="InParanoid" id="Q9HL36"/>
<dbReference type="OrthoDB" id="35401at2157"/>
<dbReference type="UniPathway" id="UPA00070">
    <property type="reaction ID" value="UER00945"/>
</dbReference>
<dbReference type="Proteomes" id="UP000001024">
    <property type="component" value="Chromosome"/>
</dbReference>
<dbReference type="GO" id="GO:0051537">
    <property type="term" value="F:2 iron, 2 sulfur cluster binding"/>
    <property type="evidence" value="ECO:0007669"/>
    <property type="project" value="UniProtKB-KW"/>
</dbReference>
<dbReference type="GO" id="GO:0009055">
    <property type="term" value="F:electron transfer activity"/>
    <property type="evidence" value="ECO:0007669"/>
    <property type="project" value="UniProtKB-UniRule"/>
</dbReference>
<dbReference type="GO" id="GO:0050660">
    <property type="term" value="F:flavin adenine dinucleotide binding"/>
    <property type="evidence" value="ECO:0007669"/>
    <property type="project" value="InterPro"/>
</dbReference>
<dbReference type="GO" id="GO:0046872">
    <property type="term" value="F:metal ion binding"/>
    <property type="evidence" value="ECO:0007669"/>
    <property type="project" value="UniProtKB-KW"/>
</dbReference>
<dbReference type="GO" id="GO:0016491">
    <property type="term" value="F:oxidoreductase activity"/>
    <property type="evidence" value="ECO:0007669"/>
    <property type="project" value="InterPro"/>
</dbReference>
<dbReference type="GO" id="GO:0044205">
    <property type="term" value="P:'de novo' UMP biosynthetic process"/>
    <property type="evidence" value="ECO:0007669"/>
    <property type="project" value="UniProtKB-UniRule"/>
</dbReference>
<dbReference type="CDD" id="cd06220">
    <property type="entry name" value="DHOD_e_trans_like2"/>
    <property type="match status" value="1"/>
</dbReference>
<dbReference type="Gene3D" id="2.10.240.10">
    <property type="entry name" value="Dihydroorotate dehydrogenase, electron transfer subunit"/>
    <property type="match status" value="1"/>
</dbReference>
<dbReference type="Gene3D" id="3.40.50.80">
    <property type="entry name" value="Nucleotide-binding domain of ferredoxin-NADP reductase (FNR) module"/>
    <property type="match status" value="1"/>
</dbReference>
<dbReference type="Gene3D" id="2.40.30.10">
    <property type="entry name" value="Translation factors"/>
    <property type="match status" value="1"/>
</dbReference>
<dbReference type="HAMAP" id="MF_01211">
    <property type="entry name" value="DHODB_Fe_S_bind"/>
    <property type="match status" value="1"/>
</dbReference>
<dbReference type="InterPro" id="IPR012165">
    <property type="entry name" value="Cyt_c3_hydrogenase_gsu"/>
</dbReference>
<dbReference type="InterPro" id="IPR037117">
    <property type="entry name" value="Dihydroorotate_DH_ele_sf"/>
</dbReference>
<dbReference type="InterPro" id="IPR019480">
    <property type="entry name" value="Dihydroorotate_DH_Fe-S-bd"/>
</dbReference>
<dbReference type="InterPro" id="IPR023455">
    <property type="entry name" value="Dihydroorotate_DHASE_ETsu"/>
</dbReference>
<dbReference type="InterPro" id="IPR017927">
    <property type="entry name" value="FAD-bd_FR_type"/>
</dbReference>
<dbReference type="InterPro" id="IPR039261">
    <property type="entry name" value="FNR_nucleotide-bd"/>
</dbReference>
<dbReference type="InterPro" id="IPR050353">
    <property type="entry name" value="PyrK_electron_transfer"/>
</dbReference>
<dbReference type="InterPro" id="IPR017938">
    <property type="entry name" value="Riboflavin_synthase-like_b-brl"/>
</dbReference>
<dbReference type="NCBIfam" id="NF000796">
    <property type="entry name" value="PRK00054.1-1"/>
    <property type="match status" value="1"/>
</dbReference>
<dbReference type="PANTHER" id="PTHR43513">
    <property type="entry name" value="DIHYDROOROTATE DEHYDROGENASE B (NAD(+)), ELECTRON TRANSFER SUBUNIT"/>
    <property type="match status" value="1"/>
</dbReference>
<dbReference type="PANTHER" id="PTHR43513:SF3">
    <property type="entry name" value="DIHYDROOROTATE DEHYDROGENASE B (NAD(+)), ELECTRON TRANSFER SUBUNIT-RELATED"/>
    <property type="match status" value="1"/>
</dbReference>
<dbReference type="Pfam" id="PF10418">
    <property type="entry name" value="DHODB_Fe-S_bind"/>
    <property type="match status" value="1"/>
</dbReference>
<dbReference type="PIRSF" id="PIRSF006816">
    <property type="entry name" value="Cyc3_hyd_g"/>
    <property type="match status" value="1"/>
</dbReference>
<dbReference type="SUPFAM" id="SSF52343">
    <property type="entry name" value="Ferredoxin reductase-like, C-terminal NADP-linked domain"/>
    <property type="match status" value="1"/>
</dbReference>
<dbReference type="SUPFAM" id="SSF63380">
    <property type="entry name" value="Riboflavin synthase domain-like"/>
    <property type="match status" value="1"/>
</dbReference>
<dbReference type="PROSITE" id="PS51384">
    <property type="entry name" value="FAD_FR"/>
    <property type="match status" value="1"/>
</dbReference>
<evidence type="ECO:0000255" key="1">
    <source>
        <dbReference type="HAMAP-Rule" id="MF_01211"/>
    </source>
</evidence>
<protein>
    <recommendedName>
        <fullName evidence="1">Probable dihydroorotate dehydrogenase B (NAD(+)), electron transfer subunit</fullName>
    </recommendedName>
    <alternativeName>
        <fullName evidence="1">Dihydroorotate oxidase B, electron transfer subunit</fullName>
    </alternativeName>
</protein>
<keyword id="KW-0001">2Fe-2S</keyword>
<keyword id="KW-0249">Electron transport</keyword>
<keyword id="KW-0274">FAD</keyword>
<keyword id="KW-0285">Flavoprotein</keyword>
<keyword id="KW-0408">Iron</keyword>
<keyword id="KW-0411">Iron-sulfur</keyword>
<keyword id="KW-0479">Metal-binding</keyword>
<keyword id="KW-0665">Pyrimidine biosynthesis</keyword>
<keyword id="KW-1185">Reference proteome</keyword>
<keyword id="KW-0813">Transport</keyword>